<gene>
    <name evidence="1" type="primary">dtd</name>
    <name type="ordered locus">Adeh_0179</name>
</gene>
<accession>Q2IMC5</accession>
<comment type="function">
    <text evidence="1">An aminoacyl-tRNA editing enzyme that deacylates mischarged D-aminoacyl-tRNAs. Also deacylates mischarged glycyl-tRNA(Ala), protecting cells against glycine mischarging by AlaRS. Acts via tRNA-based rather than protein-based catalysis; rejects L-amino acids rather than detecting D-amino acids in the active site. By recycling D-aminoacyl-tRNA to D-amino acids and free tRNA molecules, this enzyme counteracts the toxicity associated with the formation of D-aminoacyl-tRNA entities in vivo and helps enforce protein L-homochirality.</text>
</comment>
<comment type="catalytic activity">
    <reaction evidence="1">
        <text>glycyl-tRNA(Ala) + H2O = tRNA(Ala) + glycine + H(+)</text>
        <dbReference type="Rhea" id="RHEA:53744"/>
        <dbReference type="Rhea" id="RHEA-COMP:9657"/>
        <dbReference type="Rhea" id="RHEA-COMP:13640"/>
        <dbReference type="ChEBI" id="CHEBI:15377"/>
        <dbReference type="ChEBI" id="CHEBI:15378"/>
        <dbReference type="ChEBI" id="CHEBI:57305"/>
        <dbReference type="ChEBI" id="CHEBI:78442"/>
        <dbReference type="ChEBI" id="CHEBI:78522"/>
        <dbReference type="EC" id="3.1.1.96"/>
    </reaction>
</comment>
<comment type="catalytic activity">
    <reaction evidence="1">
        <text>a D-aminoacyl-tRNA + H2O = a tRNA + a D-alpha-amino acid + H(+)</text>
        <dbReference type="Rhea" id="RHEA:13953"/>
        <dbReference type="Rhea" id="RHEA-COMP:10123"/>
        <dbReference type="Rhea" id="RHEA-COMP:10124"/>
        <dbReference type="ChEBI" id="CHEBI:15377"/>
        <dbReference type="ChEBI" id="CHEBI:15378"/>
        <dbReference type="ChEBI" id="CHEBI:59871"/>
        <dbReference type="ChEBI" id="CHEBI:78442"/>
        <dbReference type="ChEBI" id="CHEBI:79333"/>
        <dbReference type="EC" id="3.1.1.96"/>
    </reaction>
</comment>
<comment type="subunit">
    <text evidence="1">Homodimer.</text>
</comment>
<comment type="subcellular location">
    <subcellularLocation>
        <location evidence="1">Cytoplasm</location>
    </subcellularLocation>
</comment>
<comment type="domain">
    <text evidence="1">A Gly-cisPro motif from one monomer fits into the active site of the other monomer to allow specific chiral rejection of L-amino acids.</text>
</comment>
<comment type="similarity">
    <text evidence="1">Belongs to the DTD family.</text>
</comment>
<proteinExistence type="inferred from homology"/>
<protein>
    <recommendedName>
        <fullName evidence="1">D-aminoacyl-tRNA deacylase</fullName>
        <shortName evidence="1">DTD</shortName>
        <ecNumber evidence="1">3.1.1.96</ecNumber>
    </recommendedName>
    <alternativeName>
        <fullName evidence="1">Gly-tRNA(Ala) deacylase</fullName>
    </alternativeName>
</protein>
<keyword id="KW-0963">Cytoplasm</keyword>
<keyword id="KW-0378">Hydrolase</keyword>
<keyword id="KW-1185">Reference proteome</keyword>
<keyword id="KW-0694">RNA-binding</keyword>
<keyword id="KW-0820">tRNA-binding</keyword>
<name>DTD_ANADE</name>
<dbReference type="EC" id="3.1.1.96" evidence="1"/>
<dbReference type="EMBL" id="CP000251">
    <property type="protein sequence ID" value="ABC79956.1"/>
    <property type="molecule type" value="Genomic_DNA"/>
</dbReference>
<dbReference type="RefSeq" id="WP_011419239.1">
    <property type="nucleotide sequence ID" value="NC_007760.1"/>
</dbReference>
<dbReference type="SMR" id="Q2IMC5"/>
<dbReference type="STRING" id="290397.Adeh_0179"/>
<dbReference type="KEGG" id="ade:Adeh_0179"/>
<dbReference type="eggNOG" id="COG1490">
    <property type="taxonomic scope" value="Bacteria"/>
</dbReference>
<dbReference type="HOGENOM" id="CLU_076901_1_0_7"/>
<dbReference type="Proteomes" id="UP000001935">
    <property type="component" value="Chromosome"/>
</dbReference>
<dbReference type="GO" id="GO:0005737">
    <property type="term" value="C:cytoplasm"/>
    <property type="evidence" value="ECO:0007669"/>
    <property type="project" value="UniProtKB-SubCell"/>
</dbReference>
<dbReference type="GO" id="GO:0051500">
    <property type="term" value="F:D-tyrosyl-tRNA(Tyr) deacylase activity"/>
    <property type="evidence" value="ECO:0007669"/>
    <property type="project" value="TreeGrafter"/>
</dbReference>
<dbReference type="GO" id="GO:0106026">
    <property type="term" value="F:Gly-tRNA(Ala) deacylase activity"/>
    <property type="evidence" value="ECO:0007669"/>
    <property type="project" value="UniProtKB-UniRule"/>
</dbReference>
<dbReference type="GO" id="GO:0043908">
    <property type="term" value="F:Ser(Gly)-tRNA(Ala) hydrolase activity"/>
    <property type="evidence" value="ECO:0007669"/>
    <property type="project" value="UniProtKB-UniRule"/>
</dbReference>
<dbReference type="GO" id="GO:0000049">
    <property type="term" value="F:tRNA binding"/>
    <property type="evidence" value="ECO:0007669"/>
    <property type="project" value="UniProtKB-UniRule"/>
</dbReference>
<dbReference type="GO" id="GO:0019478">
    <property type="term" value="P:D-amino acid catabolic process"/>
    <property type="evidence" value="ECO:0007669"/>
    <property type="project" value="UniProtKB-UniRule"/>
</dbReference>
<dbReference type="CDD" id="cd00563">
    <property type="entry name" value="Dtyr_deacylase"/>
    <property type="match status" value="1"/>
</dbReference>
<dbReference type="FunFam" id="3.50.80.10:FF:000001">
    <property type="entry name" value="D-aminoacyl-tRNA deacylase"/>
    <property type="match status" value="1"/>
</dbReference>
<dbReference type="Gene3D" id="3.50.80.10">
    <property type="entry name" value="D-tyrosyl-tRNA(Tyr) deacylase"/>
    <property type="match status" value="1"/>
</dbReference>
<dbReference type="HAMAP" id="MF_00518">
    <property type="entry name" value="Deacylase_Dtd"/>
    <property type="match status" value="1"/>
</dbReference>
<dbReference type="InterPro" id="IPR003732">
    <property type="entry name" value="Daa-tRNA_deacyls_DTD"/>
</dbReference>
<dbReference type="InterPro" id="IPR023509">
    <property type="entry name" value="DTD-like_sf"/>
</dbReference>
<dbReference type="NCBIfam" id="TIGR00256">
    <property type="entry name" value="D-aminoacyl-tRNA deacylase"/>
    <property type="match status" value="1"/>
</dbReference>
<dbReference type="PANTHER" id="PTHR10472:SF5">
    <property type="entry name" value="D-AMINOACYL-TRNA DEACYLASE 1"/>
    <property type="match status" value="1"/>
</dbReference>
<dbReference type="PANTHER" id="PTHR10472">
    <property type="entry name" value="D-TYROSYL-TRNA TYR DEACYLASE"/>
    <property type="match status" value="1"/>
</dbReference>
<dbReference type="Pfam" id="PF02580">
    <property type="entry name" value="Tyr_Deacylase"/>
    <property type="match status" value="1"/>
</dbReference>
<dbReference type="SUPFAM" id="SSF69500">
    <property type="entry name" value="DTD-like"/>
    <property type="match status" value="1"/>
</dbReference>
<organism>
    <name type="scientific">Anaeromyxobacter dehalogenans (strain 2CP-C)</name>
    <dbReference type="NCBI Taxonomy" id="290397"/>
    <lineage>
        <taxon>Bacteria</taxon>
        <taxon>Pseudomonadati</taxon>
        <taxon>Myxococcota</taxon>
        <taxon>Myxococcia</taxon>
        <taxon>Myxococcales</taxon>
        <taxon>Cystobacterineae</taxon>
        <taxon>Anaeromyxobacteraceae</taxon>
        <taxon>Anaeromyxobacter</taxon>
    </lineage>
</organism>
<feature type="chain" id="PRO_0000259261" description="D-aminoacyl-tRNA deacylase">
    <location>
        <begin position="1"/>
        <end position="149"/>
    </location>
</feature>
<feature type="short sequence motif" description="Gly-cisPro motif, important for rejection of L-amino acids" evidence="1">
    <location>
        <begin position="137"/>
        <end position="138"/>
    </location>
</feature>
<evidence type="ECO:0000255" key="1">
    <source>
        <dbReference type="HAMAP-Rule" id="MF_00518"/>
    </source>
</evidence>
<reference key="1">
    <citation type="submission" date="2006-01" db="EMBL/GenBank/DDBJ databases">
        <title>Complete sequence of Anaeromyxobacter dehalogenans 2CP-C.</title>
        <authorList>
            <person name="Copeland A."/>
            <person name="Lucas S."/>
            <person name="Lapidus A."/>
            <person name="Barry K."/>
            <person name="Detter J.C."/>
            <person name="Glavina T."/>
            <person name="Hammon N."/>
            <person name="Israni S."/>
            <person name="Pitluck S."/>
            <person name="Brettin T."/>
            <person name="Bruce D."/>
            <person name="Han C."/>
            <person name="Tapia R."/>
            <person name="Gilna P."/>
            <person name="Kiss H."/>
            <person name="Schmutz J."/>
            <person name="Larimer F."/>
            <person name="Land M."/>
            <person name="Kyrpides N."/>
            <person name="Anderson I."/>
            <person name="Sanford R.A."/>
            <person name="Ritalahti K.M."/>
            <person name="Thomas H.S."/>
            <person name="Kirby J.R."/>
            <person name="Zhulin I.B."/>
            <person name="Loeffler F.E."/>
            <person name="Richardson P."/>
        </authorList>
    </citation>
    <scope>NUCLEOTIDE SEQUENCE [LARGE SCALE GENOMIC DNA]</scope>
    <source>
        <strain>2CP-C</strain>
    </source>
</reference>
<sequence>MRAVVQRVSRAEVRVDGAVTGAVGRGLLVLLGVARDDGAQDARLLADKLAALRIFEDAAGKMNLAVAEVGGAVLVVSQFTLLGDARKGNRPGFSDAAPPEAANALYEAVCGMLREKGLRVETGVFRADMQVELVNDGPVTILLDSRRLF</sequence>